<gene>
    <name type="primary">HSP70</name>
</gene>
<comment type="similarity">
    <text evidence="1">Belongs to the heat shock protein 70 family.</text>
</comment>
<sequence length="516" mass="56535">MTFDGAIGIDLGTTYSCVGVWQNERLDIIANDQGNRTTPSYVAFTDSERLIGDAAKNQVAMNPHNTVFDAKRLIGRKFNDSVVQSDMKHWPFKVTTKGDDKPVISVQYRGEEKTFTPEEISSMVLLKMKETAEAYLGKQVKKAVVTVPAYFNDSQRQATKDAGTIAGLEVVRIINEPTAAAIAYGLDKGDDGKERNVLIFDLGGGTFDVTLLTIDRGIFEVKATNGDTHLGGEDFDNRLVTFFTEEFKRKNKGKNLASSHRALRRLRTACERAKRTLSSATQATIEIDALFENIDFQATITRARFEELCGDLFRSTIQPVERVLQDAKMDKRSVHDVVLVGGSTRIPKVQSLVSDFFGGKELNKSINPDEAVAYGAAVQAFILTGGKSKQTEGLLLLDVTPLTLGIETAGGVMTALIKRNTTIPTKKSQIFSTYADNQPGVHIQVFEGERAMTKDCHLLGTFDLSGIPPAPRGVPQIEVTFDLDANGILNVSAEEKGTGKRNQITITNDKGRLSKD</sequence>
<feature type="chain" id="PRO_0000078305" description="Heat shock 70 kDa protein">
    <location>
        <begin position="1"/>
        <end position="516" status="greater than"/>
    </location>
</feature>
<feature type="non-terminal residue">
    <location>
        <position position="516"/>
    </location>
</feature>
<accession>P14834</accession>
<reference key="1">
    <citation type="journal article" date="1988" name="Nucleic Acids Res.">
        <title>Structure and expression of the hsp 70 gene family of Leishmania major.</title>
        <authorList>
            <person name="Lee M.G."/>
            <person name="Atkinson B.L."/>
            <person name="Giannini S.H."/>
            <person name="van der Ploeg L.H.T."/>
        </authorList>
    </citation>
    <scope>NUCLEOTIDE SEQUENCE [GENOMIC DNA]</scope>
    <source>
        <strain>WR300</strain>
    </source>
</reference>
<evidence type="ECO:0000305" key="1"/>
<protein>
    <recommendedName>
        <fullName>Heat shock 70 kDa protein</fullName>
    </recommendedName>
</protein>
<name>HSP70_LEIMA</name>
<dbReference type="EMBL" id="M36675">
    <property type="protein sequence ID" value="AAA29251.1"/>
    <property type="molecule type" value="Genomic_DNA"/>
</dbReference>
<dbReference type="PIR" id="S06443">
    <property type="entry name" value="S06443"/>
</dbReference>
<dbReference type="SMR" id="P14834"/>
<dbReference type="VEuPathDB" id="TriTrypDB:LmjF.28.2780"/>
<dbReference type="VEuPathDB" id="TriTrypDB:LMJFC_280038800"/>
<dbReference type="VEuPathDB" id="TriTrypDB:LMJLV39_280036200"/>
<dbReference type="VEuPathDB" id="TriTrypDB:LMJSD75_280035800"/>
<dbReference type="eggNOG" id="KOG0101">
    <property type="taxonomic scope" value="Eukaryota"/>
</dbReference>
<dbReference type="GO" id="GO:0005524">
    <property type="term" value="F:ATP binding"/>
    <property type="evidence" value="ECO:0007669"/>
    <property type="project" value="UniProtKB-KW"/>
</dbReference>
<dbReference type="GO" id="GO:0140662">
    <property type="term" value="F:ATP-dependent protein folding chaperone"/>
    <property type="evidence" value="ECO:0007669"/>
    <property type="project" value="InterPro"/>
</dbReference>
<dbReference type="CDD" id="cd10233">
    <property type="entry name" value="ASKHA_NBD_HSP70_HSPA1"/>
    <property type="match status" value="1"/>
</dbReference>
<dbReference type="FunFam" id="2.60.34.10:FF:000002">
    <property type="entry name" value="Heat shock 70 kDa"/>
    <property type="match status" value="1"/>
</dbReference>
<dbReference type="FunFam" id="3.90.640.10:FF:000002">
    <property type="entry name" value="Heat shock 70 kDa"/>
    <property type="match status" value="1"/>
</dbReference>
<dbReference type="FunFam" id="3.30.420.40:FF:000172">
    <property type="entry name" value="Heat shock 70 kDa protein"/>
    <property type="match status" value="1"/>
</dbReference>
<dbReference type="FunFam" id="3.30.30.30:FF:000001">
    <property type="entry name" value="heat shock 70 kDa protein-like"/>
    <property type="match status" value="1"/>
</dbReference>
<dbReference type="FunFam" id="3.30.420.40:FF:000026">
    <property type="entry name" value="Heat shock protein 70"/>
    <property type="match status" value="1"/>
</dbReference>
<dbReference type="Gene3D" id="3.30.30.30">
    <property type="match status" value="1"/>
</dbReference>
<dbReference type="Gene3D" id="3.30.420.40">
    <property type="match status" value="2"/>
</dbReference>
<dbReference type="Gene3D" id="3.90.640.10">
    <property type="entry name" value="Actin, Chain A, domain 4"/>
    <property type="match status" value="1"/>
</dbReference>
<dbReference type="Gene3D" id="2.60.34.10">
    <property type="entry name" value="Substrate Binding Domain Of DNAk, Chain A, domain 1"/>
    <property type="match status" value="1"/>
</dbReference>
<dbReference type="InterPro" id="IPR043129">
    <property type="entry name" value="ATPase_NBD"/>
</dbReference>
<dbReference type="InterPro" id="IPR018181">
    <property type="entry name" value="Heat_shock_70_CS"/>
</dbReference>
<dbReference type="InterPro" id="IPR029047">
    <property type="entry name" value="HSP70_peptide-bd_sf"/>
</dbReference>
<dbReference type="InterPro" id="IPR013126">
    <property type="entry name" value="Hsp_70_fam"/>
</dbReference>
<dbReference type="NCBIfam" id="NF001413">
    <property type="entry name" value="PRK00290.1"/>
    <property type="match status" value="1"/>
</dbReference>
<dbReference type="PANTHER" id="PTHR19375">
    <property type="entry name" value="HEAT SHOCK PROTEIN 70KDA"/>
    <property type="match status" value="1"/>
</dbReference>
<dbReference type="Pfam" id="PF00012">
    <property type="entry name" value="HSP70"/>
    <property type="match status" value="1"/>
</dbReference>
<dbReference type="PRINTS" id="PR00301">
    <property type="entry name" value="HEATSHOCK70"/>
</dbReference>
<dbReference type="SUPFAM" id="SSF53067">
    <property type="entry name" value="Actin-like ATPase domain"/>
    <property type="match status" value="2"/>
</dbReference>
<dbReference type="SUPFAM" id="SSF100920">
    <property type="entry name" value="Heat shock protein 70kD (HSP70), peptide-binding domain"/>
    <property type="match status" value="1"/>
</dbReference>
<dbReference type="PROSITE" id="PS00297">
    <property type="entry name" value="HSP70_1"/>
    <property type="match status" value="1"/>
</dbReference>
<dbReference type="PROSITE" id="PS00329">
    <property type="entry name" value="HSP70_2"/>
    <property type="match status" value="1"/>
</dbReference>
<dbReference type="PROSITE" id="PS01036">
    <property type="entry name" value="HSP70_3"/>
    <property type="match status" value="1"/>
</dbReference>
<proteinExistence type="inferred from homology"/>
<organism>
    <name type="scientific">Leishmania major</name>
    <dbReference type="NCBI Taxonomy" id="5664"/>
    <lineage>
        <taxon>Eukaryota</taxon>
        <taxon>Discoba</taxon>
        <taxon>Euglenozoa</taxon>
        <taxon>Kinetoplastea</taxon>
        <taxon>Metakinetoplastina</taxon>
        <taxon>Trypanosomatida</taxon>
        <taxon>Trypanosomatidae</taxon>
        <taxon>Leishmaniinae</taxon>
        <taxon>Leishmania</taxon>
    </lineage>
</organism>
<keyword id="KW-0067">ATP-binding</keyword>
<keyword id="KW-0547">Nucleotide-binding</keyword>
<keyword id="KW-0346">Stress response</keyword>